<gene>
    <name evidence="1" type="primary">radB</name>
    <name type="ordered locus">TON_1407</name>
</gene>
<reference key="1">
    <citation type="journal article" date="2008" name="J. Bacteriol.">
        <title>The complete genome sequence of Thermococcus onnurineus NA1 reveals a mixed heterotrophic and carboxydotrophic metabolism.</title>
        <authorList>
            <person name="Lee H.S."/>
            <person name="Kang S.G."/>
            <person name="Bae S.S."/>
            <person name="Lim J.K."/>
            <person name="Cho Y."/>
            <person name="Kim Y.J."/>
            <person name="Jeon J.H."/>
            <person name="Cha S.-S."/>
            <person name="Kwon K.K."/>
            <person name="Kim H.-T."/>
            <person name="Park C.-J."/>
            <person name="Lee H.-W."/>
            <person name="Kim S.I."/>
            <person name="Chun J."/>
            <person name="Colwell R.R."/>
            <person name="Kim S.-J."/>
            <person name="Lee J.-H."/>
        </authorList>
    </citation>
    <scope>NUCLEOTIDE SEQUENCE [LARGE SCALE GENOMIC DNA]</scope>
    <source>
        <strain>NA1</strain>
    </source>
</reference>
<evidence type="ECO:0000255" key="1">
    <source>
        <dbReference type="HAMAP-Rule" id="MF_00350"/>
    </source>
</evidence>
<proteinExistence type="inferred from homology"/>
<sequence>MLSTGVKSLDELLGGGIAPEVLTQVYGSFATGKTTLAVQIGLLSGGKVAYVDTEGGFSPERLAQMAESRGLDPEEALQRFILFTPADFKEQRRTIGSLKKIVDKSFSLIVVDSITAHYRVEEQRKNLTAELGKQLQVLLWLARKLGIPVIVINQVHFDSRAERMKPVAEHTLGYRCKDILRLDKLNTPGLRVALLERHRFRPEGGMVYFRITEKGIEDVLGREE</sequence>
<organism>
    <name type="scientific">Thermococcus onnurineus (strain NA1)</name>
    <dbReference type="NCBI Taxonomy" id="523850"/>
    <lineage>
        <taxon>Archaea</taxon>
        <taxon>Methanobacteriati</taxon>
        <taxon>Methanobacteriota</taxon>
        <taxon>Thermococci</taxon>
        <taxon>Thermococcales</taxon>
        <taxon>Thermococcaceae</taxon>
        <taxon>Thermococcus</taxon>
    </lineage>
</organism>
<accession>B6YXT4</accession>
<keyword id="KW-0067">ATP-binding</keyword>
<keyword id="KW-0227">DNA damage</keyword>
<keyword id="KW-0233">DNA recombination</keyword>
<keyword id="KW-0238">DNA-binding</keyword>
<keyword id="KW-0547">Nucleotide-binding</keyword>
<protein>
    <recommendedName>
        <fullName evidence="1">DNA repair and recombination protein RadB</fullName>
    </recommendedName>
</protein>
<dbReference type="EMBL" id="CP000855">
    <property type="protein sequence ID" value="ACJ16897.1"/>
    <property type="molecule type" value="Genomic_DNA"/>
</dbReference>
<dbReference type="RefSeq" id="WP_012572369.1">
    <property type="nucleotide sequence ID" value="NC_011529.1"/>
</dbReference>
<dbReference type="SMR" id="B6YXT4"/>
<dbReference type="STRING" id="523850.TON_1407"/>
<dbReference type="GeneID" id="7018441"/>
<dbReference type="KEGG" id="ton:TON_1407"/>
<dbReference type="PATRIC" id="fig|523850.10.peg.1418"/>
<dbReference type="eggNOG" id="arCOG00417">
    <property type="taxonomic scope" value="Archaea"/>
</dbReference>
<dbReference type="HOGENOM" id="CLU_041732_2_1_2"/>
<dbReference type="OrthoDB" id="17644at2157"/>
<dbReference type="Proteomes" id="UP000002727">
    <property type="component" value="Chromosome"/>
</dbReference>
<dbReference type="GO" id="GO:0005524">
    <property type="term" value="F:ATP binding"/>
    <property type="evidence" value="ECO:0007669"/>
    <property type="project" value="UniProtKB-UniRule"/>
</dbReference>
<dbReference type="GO" id="GO:0140664">
    <property type="term" value="F:ATP-dependent DNA damage sensor activity"/>
    <property type="evidence" value="ECO:0007669"/>
    <property type="project" value="InterPro"/>
</dbReference>
<dbReference type="GO" id="GO:0003684">
    <property type="term" value="F:damaged DNA binding"/>
    <property type="evidence" value="ECO:0007669"/>
    <property type="project" value="UniProtKB-UniRule"/>
</dbReference>
<dbReference type="GO" id="GO:0006310">
    <property type="term" value="P:DNA recombination"/>
    <property type="evidence" value="ECO:0007669"/>
    <property type="project" value="UniProtKB-UniRule"/>
</dbReference>
<dbReference type="GO" id="GO:0006281">
    <property type="term" value="P:DNA repair"/>
    <property type="evidence" value="ECO:0007669"/>
    <property type="project" value="UniProtKB-UniRule"/>
</dbReference>
<dbReference type="Gene3D" id="3.40.50.300">
    <property type="entry name" value="P-loop containing nucleotide triphosphate hydrolases"/>
    <property type="match status" value="1"/>
</dbReference>
<dbReference type="HAMAP" id="MF_00350">
    <property type="entry name" value="RadB"/>
    <property type="match status" value="1"/>
</dbReference>
<dbReference type="InterPro" id="IPR013632">
    <property type="entry name" value="DNA_recomb/repair_Rad51_C"/>
</dbReference>
<dbReference type="InterPro" id="IPR011939">
    <property type="entry name" value="DNA_repair_and_recomb_RadB"/>
</dbReference>
<dbReference type="InterPro" id="IPR027417">
    <property type="entry name" value="P-loop_NTPase"/>
</dbReference>
<dbReference type="InterPro" id="IPR020588">
    <property type="entry name" value="RecA_ATP-bd"/>
</dbReference>
<dbReference type="NCBIfam" id="TIGR02237">
    <property type="entry name" value="recomb_radB"/>
    <property type="match status" value="1"/>
</dbReference>
<dbReference type="PANTHER" id="PTHR22942:SF47">
    <property type="entry name" value="DNA REPAIR AND RECOMBINATION PROTEIN RADB"/>
    <property type="match status" value="1"/>
</dbReference>
<dbReference type="PANTHER" id="PTHR22942">
    <property type="entry name" value="RECA/RAD51/RADA DNA STRAND-PAIRING FAMILY MEMBER"/>
    <property type="match status" value="1"/>
</dbReference>
<dbReference type="Pfam" id="PF08423">
    <property type="entry name" value="Rad51"/>
    <property type="match status" value="1"/>
</dbReference>
<dbReference type="PIRSF" id="PIRSF003336">
    <property type="entry name" value="RadB"/>
    <property type="match status" value="1"/>
</dbReference>
<dbReference type="PRINTS" id="PR01874">
    <property type="entry name" value="DNAREPAIRADA"/>
</dbReference>
<dbReference type="SUPFAM" id="SSF52540">
    <property type="entry name" value="P-loop containing nucleoside triphosphate hydrolases"/>
    <property type="match status" value="1"/>
</dbReference>
<dbReference type="PROSITE" id="PS50162">
    <property type="entry name" value="RECA_2"/>
    <property type="match status" value="1"/>
</dbReference>
<comment type="function">
    <text evidence="1">Involved in DNA repair and in homologous recombination. May regulate the cleavage reactions of the branch-structured DNA. Has a very weak ATPase activity that is not stimulated by DNA. Binds DNA but does not promote DNA strands exchange.</text>
</comment>
<comment type="similarity">
    <text evidence="1">Belongs to the eukaryotic RecA-like protein family. RadB subfamily.</text>
</comment>
<feature type="chain" id="PRO_1000120516" description="DNA repair and recombination protein RadB">
    <location>
        <begin position="1"/>
        <end position="224"/>
    </location>
</feature>
<name>RADB_THEON</name>